<organism>
    <name type="scientific">Yersinia enterocolitica serotype O:8 / biotype 1B (strain NCTC 13174 / 8081)</name>
    <dbReference type="NCBI Taxonomy" id="393305"/>
    <lineage>
        <taxon>Bacteria</taxon>
        <taxon>Pseudomonadati</taxon>
        <taxon>Pseudomonadota</taxon>
        <taxon>Gammaproteobacteria</taxon>
        <taxon>Enterobacterales</taxon>
        <taxon>Yersiniaceae</taxon>
        <taxon>Yersinia</taxon>
    </lineage>
</organism>
<reference key="1">
    <citation type="journal article" date="1996" name="Mol. Microbiol.">
        <title>Temperature-dependent regulation of Yersinia enterocolitica class III flagellar genes.</title>
        <authorList>
            <person name="Kapatral V."/>
            <person name="Olson J.W."/>
            <person name="Pepe J.C."/>
            <person name="Miller V.L."/>
            <person name="Minnich S.A."/>
        </authorList>
    </citation>
    <scope>NUCLEOTIDE SEQUENCE [GENOMIC DNA]</scope>
</reference>
<reference key="2">
    <citation type="journal article" date="2006" name="PLoS Genet.">
        <title>The complete genome sequence and comparative genome analysis of the high pathogenicity Yersinia enterocolitica strain 8081.</title>
        <authorList>
            <person name="Thomson N.R."/>
            <person name="Howard S."/>
            <person name="Wren B.W."/>
            <person name="Holden M.T.G."/>
            <person name="Crossman L."/>
            <person name="Challis G.L."/>
            <person name="Churcher C."/>
            <person name="Mungall K."/>
            <person name="Brooks K."/>
            <person name="Chillingworth T."/>
            <person name="Feltwell T."/>
            <person name="Abdellah Z."/>
            <person name="Hauser H."/>
            <person name="Jagels K."/>
            <person name="Maddison M."/>
            <person name="Moule S."/>
            <person name="Sanders M."/>
            <person name="Whitehead S."/>
            <person name="Quail M.A."/>
            <person name="Dougan G."/>
            <person name="Parkhill J."/>
            <person name="Prentice M.B."/>
        </authorList>
    </citation>
    <scope>NUCLEOTIDE SEQUENCE [LARGE SCALE GENOMIC DNA]</scope>
    <source>
        <strain>NCTC 13174 / 8081</strain>
    </source>
</reference>
<sequence>MVVERLQTNLDQQLELLESLKTVVAQEQQLLCSGRIQGIVLQGVTEQKSSILATLAYLDQTRLTTEKNINIQAPYSNVPALAERWQRILELAEGLRYGNLHNGLLLQQHIEHNTQALAVLNTRHGQSLYGPDGHAKGASLLGRKIGI</sequence>
<keyword id="KW-1005">Bacterial flagellum biogenesis</keyword>
<keyword id="KW-0963">Cytoplasm</keyword>
<gene>
    <name type="primary">flgN</name>
    <name type="ordered locus">YE2563</name>
</gene>
<dbReference type="EMBL" id="U37141">
    <property type="protein sequence ID" value="AAB52956.1"/>
    <property type="molecule type" value="Genomic_DNA"/>
</dbReference>
<dbReference type="EMBL" id="AM286415">
    <property type="protein sequence ID" value="CAL12604.1"/>
    <property type="status" value="ALT_INIT"/>
    <property type="molecule type" value="Genomic_DNA"/>
</dbReference>
<dbReference type="PIR" id="S70934">
    <property type="entry name" value="S70934"/>
</dbReference>
<dbReference type="RefSeq" id="YP_001006767.1">
    <property type="nucleotide sequence ID" value="NC_008800.1"/>
</dbReference>
<dbReference type="SMR" id="A1JT33"/>
<dbReference type="KEGG" id="yen:YE2563"/>
<dbReference type="PATRIC" id="fig|393305.7.peg.2721"/>
<dbReference type="eggNOG" id="COG3418">
    <property type="taxonomic scope" value="Bacteria"/>
</dbReference>
<dbReference type="HOGENOM" id="CLU_137423_2_0_6"/>
<dbReference type="OrthoDB" id="6462803at2"/>
<dbReference type="Proteomes" id="UP000000642">
    <property type="component" value="Chromosome"/>
</dbReference>
<dbReference type="GO" id="GO:0005737">
    <property type="term" value="C:cytoplasm"/>
    <property type="evidence" value="ECO:0007669"/>
    <property type="project" value="UniProtKB-SubCell"/>
</dbReference>
<dbReference type="GO" id="GO:0044780">
    <property type="term" value="P:bacterial-type flagellum assembly"/>
    <property type="evidence" value="ECO:0007669"/>
    <property type="project" value="InterPro"/>
</dbReference>
<dbReference type="Gene3D" id="1.20.58.300">
    <property type="entry name" value="FlgN-like"/>
    <property type="match status" value="1"/>
</dbReference>
<dbReference type="InterPro" id="IPR007809">
    <property type="entry name" value="FlgN-like"/>
</dbReference>
<dbReference type="InterPro" id="IPR036679">
    <property type="entry name" value="FlgN-like_sf"/>
</dbReference>
<dbReference type="Pfam" id="PF05130">
    <property type="entry name" value="FlgN"/>
    <property type="match status" value="1"/>
</dbReference>
<dbReference type="SUPFAM" id="SSF140566">
    <property type="entry name" value="FlgN-like"/>
    <property type="match status" value="1"/>
</dbReference>
<name>FLGN_YERE8</name>
<comment type="function">
    <text evidence="1">Required for the efficient initiation of filament assembly.</text>
</comment>
<comment type="subcellular location">
    <subcellularLocation>
        <location evidence="2">Cytoplasm</location>
    </subcellularLocation>
</comment>
<comment type="similarity">
    <text evidence="2">Belongs to the FlgN family.</text>
</comment>
<comment type="sequence caution" evidence="2">
    <conflict type="erroneous initiation">
        <sequence resource="EMBL-CDS" id="CAL12604"/>
    </conflict>
</comment>
<accession>A1JT33</accession>
<accession>Q56854</accession>
<accession>Q56890</accession>
<evidence type="ECO:0000250" key="1"/>
<evidence type="ECO:0000305" key="2"/>
<protein>
    <recommendedName>
        <fullName>Flagella synthesis protein FlgN</fullName>
    </recommendedName>
</protein>
<proteinExistence type="inferred from homology"/>
<feature type="chain" id="PRO_0000285828" description="Flagella synthesis protein FlgN">
    <location>
        <begin position="1"/>
        <end position="147"/>
    </location>
</feature>
<feature type="sequence conflict" description="In Ref. 1; AAB52956." evidence="2" ref="1">
    <original>R</original>
    <variation>A</variation>
    <location>
        <position position="84"/>
    </location>
</feature>
<feature type="sequence conflict" description="In Ref. 1; AAB52956." evidence="2" ref="1">
    <original>NTR</original>
    <variation>YTP</variation>
    <location>
        <begin position="121"/>
        <end position="123"/>
    </location>
</feature>